<keyword id="KW-0963">Cytoplasm</keyword>
<keyword id="KW-0255">Endonuclease</keyword>
<keyword id="KW-0378">Hydrolase</keyword>
<keyword id="KW-0479">Metal-binding</keyword>
<keyword id="KW-0540">Nuclease</keyword>
<keyword id="KW-1185">Reference proteome</keyword>
<keyword id="KW-0690">Ribosome biogenesis</keyword>
<keyword id="KW-0698">rRNA processing</keyword>
<keyword id="KW-0862">Zinc</keyword>
<protein>
    <recommendedName>
        <fullName evidence="1">Endoribonuclease YbeY</fullName>
        <ecNumber evidence="1">3.1.-.-</ecNumber>
    </recommendedName>
</protein>
<dbReference type="EC" id="3.1.-.-" evidence="1"/>
<dbReference type="EMBL" id="AP006618">
    <property type="protein sequence ID" value="BAD56278.1"/>
    <property type="molecule type" value="Genomic_DNA"/>
</dbReference>
<dbReference type="RefSeq" id="WP_011207963.1">
    <property type="nucleotide sequence ID" value="NC_006361.1"/>
</dbReference>
<dbReference type="SMR" id="Q5YZW3"/>
<dbReference type="STRING" id="247156.NFA_14330"/>
<dbReference type="GeneID" id="61132249"/>
<dbReference type="KEGG" id="nfa:NFA_14330"/>
<dbReference type="eggNOG" id="COG0319">
    <property type="taxonomic scope" value="Bacteria"/>
</dbReference>
<dbReference type="HOGENOM" id="CLU_106710_3_2_11"/>
<dbReference type="OrthoDB" id="9807740at2"/>
<dbReference type="Proteomes" id="UP000006820">
    <property type="component" value="Chromosome"/>
</dbReference>
<dbReference type="GO" id="GO:0005737">
    <property type="term" value="C:cytoplasm"/>
    <property type="evidence" value="ECO:0007669"/>
    <property type="project" value="UniProtKB-SubCell"/>
</dbReference>
<dbReference type="GO" id="GO:0004222">
    <property type="term" value="F:metalloendopeptidase activity"/>
    <property type="evidence" value="ECO:0007669"/>
    <property type="project" value="InterPro"/>
</dbReference>
<dbReference type="GO" id="GO:0004521">
    <property type="term" value="F:RNA endonuclease activity"/>
    <property type="evidence" value="ECO:0007669"/>
    <property type="project" value="UniProtKB-UniRule"/>
</dbReference>
<dbReference type="GO" id="GO:0008270">
    <property type="term" value="F:zinc ion binding"/>
    <property type="evidence" value="ECO:0007669"/>
    <property type="project" value="UniProtKB-UniRule"/>
</dbReference>
<dbReference type="GO" id="GO:0006364">
    <property type="term" value="P:rRNA processing"/>
    <property type="evidence" value="ECO:0007669"/>
    <property type="project" value="UniProtKB-UniRule"/>
</dbReference>
<dbReference type="Gene3D" id="3.40.390.30">
    <property type="entry name" value="Metalloproteases ('zincins'), catalytic domain"/>
    <property type="match status" value="1"/>
</dbReference>
<dbReference type="HAMAP" id="MF_00009">
    <property type="entry name" value="Endoribonucl_YbeY"/>
    <property type="match status" value="1"/>
</dbReference>
<dbReference type="InterPro" id="IPR023091">
    <property type="entry name" value="MetalPrtase_cat_dom_sf_prd"/>
</dbReference>
<dbReference type="InterPro" id="IPR002036">
    <property type="entry name" value="YbeY"/>
</dbReference>
<dbReference type="InterPro" id="IPR020549">
    <property type="entry name" value="YbeY_CS"/>
</dbReference>
<dbReference type="NCBIfam" id="TIGR00043">
    <property type="entry name" value="rRNA maturation RNase YbeY"/>
    <property type="match status" value="1"/>
</dbReference>
<dbReference type="PANTHER" id="PTHR46986">
    <property type="entry name" value="ENDORIBONUCLEASE YBEY, CHLOROPLASTIC"/>
    <property type="match status" value="1"/>
</dbReference>
<dbReference type="PANTHER" id="PTHR46986:SF1">
    <property type="entry name" value="ENDORIBONUCLEASE YBEY, CHLOROPLASTIC"/>
    <property type="match status" value="1"/>
</dbReference>
<dbReference type="Pfam" id="PF02130">
    <property type="entry name" value="YbeY"/>
    <property type="match status" value="1"/>
</dbReference>
<dbReference type="SUPFAM" id="SSF55486">
    <property type="entry name" value="Metalloproteases ('zincins'), catalytic domain"/>
    <property type="match status" value="1"/>
</dbReference>
<dbReference type="PROSITE" id="PS01306">
    <property type="entry name" value="UPF0054"/>
    <property type="match status" value="1"/>
</dbReference>
<name>YBEY_NOCFA</name>
<proteinExistence type="inferred from homology"/>
<evidence type="ECO:0000255" key="1">
    <source>
        <dbReference type="HAMAP-Rule" id="MF_00009"/>
    </source>
</evidence>
<accession>Q5YZW3</accession>
<organism>
    <name type="scientific">Nocardia farcinica (strain IFM 10152)</name>
    <dbReference type="NCBI Taxonomy" id="247156"/>
    <lineage>
        <taxon>Bacteria</taxon>
        <taxon>Bacillati</taxon>
        <taxon>Actinomycetota</taxon>
        <taxon>Actinomycetes</taxon>
        <taxon>Mycobacteriales</taxon>
        <taxon>Nocardiaceae</taxon>
        <taxon>Nocardia</taxon>
    </lineage>
</organism>
<sequence length="184" mass="20216">MSIEIANESGIDVPEEDLVSVARFVIGRMDVHPAAELSMVLVDLDTMADLHMRWMDLPGPTDVMSFPMDELEPGGRPDSPEPGPSMLGDIVLCPEFAADQAHKAGHSLEHELALLTVHGVLHLLGYDHAEPEEEKEMFALQARLLEEWYESLREARRRAELAERDARLLGKAGFTAPGDALGPA</sequence>
<feature type="chain" id="PRO_0000102498" description="Endoribonuclease YbeY">
    <location>
        <begin position="1"/>
        <end position="184"/>
    </location>
</feature>
<feature type="binding site" evidence="1">
    <location>
        <position position="118"/>
    </location>
    <ligand>
        <name>Zn(2+)</name>
        <dbReference type="ChEBI" id="CHEBI:29105"/>
        <note>catalytic</note>
    </ligand>
</feature>
<feature type="binding site" evidence="1">
    <location>
        <position position="122"/>
    </location>
    <ligand>
        <name>Zn(2+)</name>
        <dbReference type="ChEBI" id="CHEBI:29105"/>
        <note>catalytic</note>
    </ligand>
</feature>
<feature type="binding site" evidence="1">
    <location>
        <position position="128"/>
    </location>
    <ligand>
        <name>Zn(2+)</name>
        <dbReference type="ChEBI" id="CHEBI:29105"/>
        <note>catalytic</note>
    </ligand>
</feature>
<reference key="1">
    <citation type="journal article" date="2004" name="Proc. Natl. Acad. Sci. U.S.A.">
        <title>The complete genomic sequence of Nocardia farcinica IFM 10152.</title>
        <authorList>
            <person name="Ishikawa J."/>
            <person name="Yamashita A."/>
            <person name="Mikami Y."/>
            <person name="Hoshino Y."/>
            <person name="Kurita H."/>
            <person name="Hotta K."/>
            <person name="Shiba T."/>
            <person name="Hattori M."/>
        </authorList>
    </citation>
    <scope>NUCLEOTIDE SEQUENCE [LARGE SCALE GENOMIC DNA]</scope>
    <source>
        <strain>IFM 10152</strain>
    </source>
</reference>
<comment type="function">
    <text evidence="1">Single strand-specific metallo-endoribonuclease involved in late-stage 70S ribosome quality control and in maturation of the 3' terminus of the 16S rRNA.</text>
</comment>
<comment type="cofactor">
    <cofactor evidence="1">
        <name>Zn(2+)</name>
        <dbReference type="ChEBI" id="CHEBI:29105"/>
    </cofactor>
    <text evidence="1">Binds 1 zinc ion.</text>
</comment>
<comment type="subcellular location">
    <subcellularLocation>
        <location evidence="1">Cytoplasm</location>
    </subcellularLocation>
</comment>
<comment type="similarity">
    <text evidence="1">Belongs to the endoribonuclease YbeY family.</text>
</comment>
<gene>
    <name evidence="1" type="primary">ybeY</name>
    <name type="ordered locus">NFA_14330</name>
</gene>